<proteinExistence type="inferred from homology"/>
<reference key="1">
    <citation type="journal article" date="2009" name="PLoS ONE">
        <title>Salmonella paratyphi C: genetic divergence from Salmonella choleraesuis and pathogenic convergence with Salmonella typhi.</title>
        <authorList>
            <person name="Liu W.-Q."/>
            <person name="Feng Y."/>
            <person name="Wang Y."/>
            <person name="Zou Q.-H."/>
            <person name="Chen F."/>
            <person name="Guo J.-T."/>
            <person name="Peng Y.-H."/>
            <person name="Jin Y."/>
            <person name="Li Y.-G."/>
            <person name="Hu S.-N."/>
            <person name="Johnston R.N."/>
            <person name="Liu G.-R."/>
            <person name="Liu S.-L."/>
        </authorList>
    </citation>
    <scope>NUCLEOTIDE SEQUENCE [LARGE SCALE GENOMIC DNA]</scope>
    <source>
        <strain>RKS4594</strain>
    </source>
</reference>
<sequence>MIIPWQGLAPDTLDNLIESFVLREGTDYGEHERSLEQKVADVKRQLQSGEAVLVWSELHETVNIMPKKQFRE</sequence>
<comment type="similarity">
    <text evidence="1">Belongs to the UPF0270 family.</text>
</comment>
<name>YHEU_SALPC</name>
<protein>
    <recommendedName>
        <fullName evidence="1">UPF0270 protein YheU</fullName>
    </recommendedName>
</protein>
<dbReference type="EMBL" id="CP000857">
    <property type="protein sequence ID" value="ACN47616.1"/>
    <property type="molecule type" value="Genomic_DNA"/>
</dbReference>
<dbReference type="RefSeq" id="WP_000586568.1">
    <property type="nucleotide sequence ID" value="NC_012125.1"/>
</dbReference>
<dbReference type="SMR" id="C0Q0D9"/>
<dbReference type="KEGG" id="sei:SPC_3532"/>
<dbReference type="HOGENOM" id="CLU_186759_1_0_6"/>
<dbReference type="Proteomes" id="UP000001599">
    <property type="component" value="Chromosome"/>
</dbReference>
<dbReference type="Gene3D" id="1.10.10.610">
    <property type="entry name" value="YehU-like"/>
    <property type="match status" value="1"/>
</dbReference>
<dbReference type="HAMAP" id="MF_00690">
    <property type="entry name" value="UPF0270"/>
    <property type="match status" value="1"/>
</dbReference>
<dbReference type="InterPro" id="IPR010648">
    <property type="entry name" value="UPF0270"/>
</dbReference>
<dbReference type="InterPro" id="IPR036685">
    <property type="entry name" value="YehU-like_sf"/>
</dbReference>
<dbReference type="NCBIfam" id="NF003438">
    <property type="entry name" value="PRK04966.1"/>
    <property type="match status" value="1"/>
</dbReference>
<dbReference type="Pfam" id="PF06794">
    <property type="entry name" value="UPF0270"/>
    <property type="match status" value="1"/>
</dbReference>
<dbReference type="PIRSF" id="PIRSF006169">
    <property type="entry name" value="UCP006169"/>
    <property type="match status" value="1"/>
</dbReference>
<dbReference type="SUPFAM" id="SSF118001">
    <property type="entry name" value="YehU-like"/>
    <property type="match status" value="1"/>
</dbReference>
<evidence type="ECO:0000255" key="1">
    <source>
        <dbReference type="HAMAP-Rule" id="MF_00690"/>
    </source>
</evidence>
<feature type="chain" id="PRO_1000198189" description="UPF0270 protein YheU">
    <location>
        <begin position="1"/>
        <end position="72"/>
    </location>
</feature>
<gene>
    <name evidence="1" type="primary">yheU</name>
    <name type="ordered locus">SPC_3532</name>
</gene>
<organism>
    <name type="scientific">Salmonella paratyphi C (strain RKS4594)</name>
    <dbReference type="NCBI Taxonomy" id="476213"/>
    <lineage>
        <taxon>Bacteria</taxon>
        <taxon>Pseudomonadati</taxon>
        <taxon>Pseudomonadota</taxon>
        <taxon>Gammaproteobacteria</taxon>
        <taxon>Enterobacterales</taxon>
        <taxon>Enterobacteriaceae</taxon>
        <taxon>Salmonella</taxon>
    </lineage>
</organism>
<accession>C0Q0D9</accession>